<reference key="1">
    <citation type="journal article" date="2002" name="Nucleic Acids Res.">
        <title>Genome sequence of Shigella flexneri 2a: insights into pathogenicity through comparison with genomes of Escherichia coli K12 and O157.</title>
        <authorList>
            <person name="Jin Q."/>
            <person name="Yuan Z."/>
            <person name="Xu J."/>
            <person name="Wang Y."/>
            <person name="Shen Y."/>
            <person name="Lu W."/>
            <person name="Wang J."/>
            <person name="Liu H."/>
            <person name="Yang J."/>
            <person name="Yang F."/>
            <person name="Zhang X."/>
            <person name="Zhang J."/>
            <person name="Yang G."/>
            <person name="Wu H."/>
            <person name="Qu D."/>
            <person name="Dong J."/>
            <person name="Sun L."/>
            <person name="Xue Y."/>
            <person name="Zhao A."/>
            <person name="Gao Y."/>
            <person name="Zhu J."/>
            <person name="Kan B."/>
            <person name="Ding K."/>
            <person name="Chen S."/>
            <person name="Cheng H."/>
            <person name="Yao Z."/>
            <person name="He B."/>
            <person name="Chen R."/>
            <person name="Ma D."/>
            <person name="Qiang B."/>
            <person name="Wen Y."/>
            <person name="Hou Y."/>
            <person name="Yu J."/>
        </authorList>
    </citation>
    <scope>NUCLEOTIDE SEQUENCE [LARGE SCALE GENOMIC DNA]</scope>
    <source>
        <strain>301 / Serotype 2a</strain>
        <plasmid>pCP301</plasmid>
    </source>
</reference>
<reference key="2">
    <citation type="journal article" date="1998" name="Microbiol. Mol. Biol. Rev.">
        <title>Type III protein secretion systems in bacterial pathogens of animals and plants.</title>
        <authorList>
            <person name="Hueck C.J."/>
        </authorList>
    </citation>
    <scope>REVIEW</scope>
    <scope>NOMENCLATURE</scope>
</reference>
<reference key="3">
    <citation type="journal article" date="2003" name="Mol. Microbiol.">
        <title>MxiK and MxiN interact with the Spa47 ATPase and are required for transit of the needle components MxiH and MxiI, but not of Ipa proteins, through the type III secretion apparatus of Shigella flexneri.</title>
        <authorList>
            <person name="Jouihri N."/>
            <person name="Sory M.P."/>
            <person name="Page A.L."/>
            <person name="Gounon P."/>
            <person name="Parsot C."/>
            <person name="Allaoui A."/>
        </authorList>
    </citation>
    <scope>FUNCTION</scope>
    <scope>SUBUNIT</scope>
    <scope>INTERACTION WITH SPA47/SCTN AND SPA33/SCTQ</scope>
    <scope>SUBCELLULAR LOCATION</scope>
    <scope>DISRUPTION PHENOTYPE</scope>
    <source>
        <strain>M90T / Serotype 5a</strain>
    </source>
</reference>
<reference key="4">
    <citation type="journal article" date="2008" name="FEMS Microbiol. Lett.">
        <title>Characterization of soluble complexes of the Shigella flexneri type III secretion system ATPase.</title>
        <authorList>
            <person name="Johnson S."/>
            <person name="Blocker A."/>
        </authorList>
    </citation>
    <scope>SUBUNIT</scope>
    <scope>INTERACTION WITH SPA47/SCTN</scope>
    <scope>SUBCELLULAR LOCATION</scope>
    <source>
        <strain>M90T / Serotype 5a</strain>
    </source>
</reference>
<reference key="5">
    <citation type="journal article" date="2015" name="Proc. Natl. Acad. Sci. U.S.A.">
        <title>Visualization of the type III secretion sorting platform of Shigella flexneri.</title>
        <authorList>
            <person name="Hu B."/>
            <person name="Morado D.R."/>
            <person name="Margolin W."/>
            <person name="Rohde J.R."/>
            <person name="Arizmendi O."/>
            <person name="Picking W.L."/>
            <person name="Picking W.D."/>
            <person name="Liu J."/>
        </authorList>
    </citation>
    <scope>FUNCTION</scope>
    <scope>SUBUNIT</scope>
    <scope>INTERACTION WITH SPA47/SCTN</scope>
    <scope>SUBCELLULAR LOCATION</scope>
    <source>
        <strain>M90T / Serotype 5a</strain>
    </source>
</reference>
<reference key="6">
    <citation type="journal article" date="2018" name="Biochemistry">
        <title>MxiN differentially regulates monomeric and oligomeric species of the Shigella type three secretion system ATPase Spa47.</title>
        <authorList>
            <person name="Case H.B."/>
            <person name="Dickenson N.E."/>
        </authorList>
    </citation>
    <scope>FUNCTION</scope>
    <scope>SUBUNIT</scope>
    <scope>INTERACTION WITH SPA47/SCTN</scope>
    <source>
        <strain>ATCC 700930 / 2457T / Serotype 2a</strain>
    </source>
</reference>
<reference key="7">
    <citation type="journal article" date="2018" name="FEMS Microbiol. Lett.">
        <title>Bacterial type III secretion systems: a complex device for the delivery of bacterial effector proteins into eukaryotic host cells.</title>
        <authorList>
            <person name="Wagner S."/>
            <person name="Grin I."/>
            <person name="Malmsheimer S."/>
            <person name="Singh N."/>
            <person name="Torres-Vargas C.E."/>
            <person name="Westerhausen S."/>
        </authorList>
    </citation>
    <scope>REVIEW</scope>
    <scope>SUBUNIT</scope>
</reference>
<reference key="8">
    <citation type="journal article" date="2019" name="J. Biol. Chem.">
        <title>The cytoplasmic domain of MxiG interacts with MxiK and directs assembly of the sorting platform in the Shigella type III secretion system.</title>
        <authorList>
            <person name="Tachiyama S."/>
            <person name="Chang Y."/>
            <person name="Muthuramalingam M."/>
            <person name="Hu B."/>
            <person name="Barta M.L."/>
            <person name="Picking W.L."/>
            <person name="Liu J."/>
            <person name="Picking W.D."/>
        </authorList>
    </citation>
    <scope>SUBUNIT</scope>
    <scope>INTERACTION WITH SPA33/SCTQ</scope>
</reference>
<organism>
    <name type="scientific">Shigella flexneri</name>
    <dbReference type="NCBI Taxonomy" id="623"/>
    <lineage>
        <taxon>Bacteria</taxon>
        <taxon>Pseudomonadati</taxon>
        <taxon>Pseudomonadota</taxon>
        <taxon>Gammaproteobacteria</taxon>
        <taxon>Enterobacterales</taxon>
        <taxon>Enterobacteriaceae</taxon>
        <taxon>Shigella</taxon>
    </lineage>
</organism>
<feature type="chain" id="PRO_0000452699" description="Type 3 secretion system stator protein">
    <location>
        <begin position="1"/>
        <end position="231"/>
    </location>
</feature>
<sequence length="231" mass="26820">MKVCNMQKGTLPVSRHHAYDGVVIKRIEKELCKTIKDRDTESKKKAICVIKEATKKAESLRIDAVCDGYQIGIQTAFEHIIDYICEWKLKQNENRRNIEDYITSLLSENLHDERIISTLLEQWLSSLRNTVTELKVVLPKCNLALRKKLELDLHKYRSDVKIILKYSEGNNYIFCSGNQVVEFSPQDVISGVKIELAEKLTKNDKKYFKELAHKKLRQIAEDLLKENPVND</sequence>
<dbReference type="EMBL" id="AF386526">
    <property type="protein sequence ID" value="AAL72324.2"/>
    <property type="molecule type" value="Genomic_DNA"/>
</dbReference>
<dbReference type="RefSeq" id="NP_858274.2">
    <property type="nucleotide sequence ID" value="NC_004851.1"/>
</dbReference>
<dbReference type="RefSeq" id="WP_010921671.1">
    <property type="nucleotide sequence ID" value="NZ_WPGS01000043.1"/>
</dbReference>
<dbReference type="SMR" id="Q99PY0"/>
<dbReference type="PaxDb" id="198214-CP0141"/>
<dbReference type="GeneID" id="1238027"/>
<dbReference type="KEGG" id="sfl:CP0141"/>
<dbReference type="PATRIC" id="fig|198214.7.peg.5391"/>
<dbReference type="HOGENOM" id="CLU_1199123_0_0_6"/>
<dbReference type="SABIO-RK" id="Q99PY0"/>
<dbReference type="Proteomes" id="UP000001006">
    <property type="component" value="Plasmid pCP301"/>
</dbReference>
<dbReference type="GO" id="GO:0005737">
    <property type="term" value="C:cytoplasm"/>
    <property type="evidence" value="ECO:0007669"/>
    <property type="project" value="UniProtKB-SubCell"/>
</dbReference>
<dbReference type="GO" id="GO:0015031">
    <property type="term" value="P:protein transport"/>
    <property type="evidence" value="ECO:0007669"/>
    <property type="project" value="UniProtKB-KW"/>
</dbReference>
<keyword id="KW-0963">Cytoplasm</keyword>
<keyword id="KW-0614">Plasmid</keyword>
<keyword id="KW-0653">Protein transport</keyword>
<keyword id="KW-1185">Reference proteome</keyword>
<keyword id="KW-0813">Transport</keyword>
<keyword id="KW-0843">Virulence</keyword>
<comment type="function">
    <text evidence="1 3 4">Component of the type III secretion system (T3SS), also called injectisome, which is used to inject bacterial effector proteins into eukaryotic host cells (PubMed:12864857, PubMed:29595954). Acts as a regulator of the Spa47/SctN ATPase activity (PubMed:29595954). It down-regulates the ATPase activity of the oligomeric Spa47/SctN, while it up-regulates the activity of the monomeric form (PubMed:29595954). Important for translocation of MxiH/SctF, the major needle component (PubMed:25583506).</text>
</comment>
<comment type="subunit">
    <text evidence="1 2 3 4 5 6">The core secretion machinery of the T3SS is composed of approximately 20 different proteins, including cytoplasmic components, a base, an export apparatus and a needle (PubMed:25583506, PubMed:30107569, PubMed:31699894). This subunit is part of the cytosolic complex (PubMed:18657109, PubMed:25583506, PubMed:31699894). Interacts directly with Spa47/SctN (T3SS ATPase) and Spa33/SctQ (the major sorting platform component) (PubMed:12864857, PubMed:18657109, PubMed:25583506, PubMed:29595954, PubMed:31699894). Homodimer in solution (PubMed:29595954).</text>
</comment>
<comment type="subcellular location">
    <subcellularLocation>
        <location evidence="2 3 10">Cytoplasm</location>
    </subcellularLocation>
</comment>
<comment type="disruption phenotype">
    <text evidence="1">Inactivation of the gene abolishes the ability of bacteria to assemble a complete type III secretion apparatus (T3SA) and therefore to secrete the translocon proteins IpaB/SctE and IpaC/SctB, and decreases the amounts of the needle filament proteins MxiH/SctF and MxiI/SctI (PubMed:12864857). Mutant is unable to invade HeLa cells (PubMed:12864857).</text>
</comment>
<gene>
    <name evidence="8" type="primary">sctL</name>
    <name evidence="11" type="synonym">mxiN</name>
    <name evidence="11" type="ordered locus">CP0141</name>
    <name evidence="11" type="ORF">SF_p0141</name>
</gene>
<geneLocation type="plasmid" evidence="11 12">
    <name>pCP301</name>
</geneLocation>
<accession>Q99PY0</accession>
<accession>A0A2G3FQJ0</accession>
<accession>A0A2S4MRM1</accession>
<accession>Q8VSH2</accession>
<evidence type="ECO:0000269" key="1">
    <source>
    </source>
</evidence>
<evidence type="ECO:0000269" key="2">
    <source>
    </source>
</evidence>
<evidence type="ECO:0000269" key="3">
    <source>
    </source>
</evidence>
<evidence type="ECO:0000269" key="4">
    <source>
    </source>
</evidence>
<evidence type="ECO:0000269" key="5">
    <source>
    </source>
</evidence>
<evidence type="ECO:0000269" key="6">
    <source>
    </source>
</evidence>
<evidence type="ECO:0000303" key="7">
    <source>
    </source>
</evidence>
<evidence type="ECO:0000303" key="8">
    <source>
    </source>
</evidence>
<evidence type="ECO:0000305" key="9"/>
<evidence type="ECO:0000305" key="10">
    <source>
    </source>
</evidence>
<evidence type="ECO:0000312" key="11">
    <source>
        <dbReference type="EMBL" id="AAL72324.2"/>
    </source>
</evidence>
<evidence type="ECO:0000312" key="12">
    <source>
        <dbReference type="Proteomes" id="UP000001006"/>
    </source>
</evidence>
<proteinExistence type="evidence at protein level"/>
<protein>
    <recommendedName>
        <fullName evidence="9">Type 3 secretion system stator protein</fullName>
        <shortName evidence="9">T3SS stator protein</shortName>
    </recommendedName>
    <alternativeName>
        <fullName evidence="7">MxiN spoke protein</fullName>
    </alternativeName>
</protein>
<name>SCTL_SHIFL</name>